<comment type="function">
    <text evidence="1">Modulates transcription in response to changes in cellular NADH/NAD(+) redox state.</text>
</comment>
<comment type="subunit">
    <text evidence="1">Homodimer.</text>
</comment>
<comment type="subcellular location">
    <subcellularLocation>
        <location evidence="1">Cytoplasm</location>
    </subcellularLocation>
</comment>
<comment type="similarity">
    <text evidence="1">Belongs to the transcriptional regulatory Rex family.</text>
</comment>
<gene>
    <name evidence="1" type="primary">rex</name>
    <name type="ordered locus">SAV2046</name>
</gene>
<name>REX_STAAM</name>
<dbReference type="EMBL" id="BA000017">
    <property type="protein sequence ID" value="BAB58208.1"/>
    <property type="molecule type" value="Genomic_DNA"/>
</dbReference>
<dbReference type="RefSeq" id="WP_001283612.1">
    <property type="nucleotide sequence ID" value="NC_002758.2"/>
</dbReference>
<dbReference type="SMR" id="P60385"/>
<dbReference type="KEGG" id="sav:SAV2046"/>
<dbReference type="HOGENOM" id="CLU_061534_1_1_9"/>
<dbReference type="PhylomeDB" id="P60385"/>
<dbReference type="Proteomes" id="UP000002481">
    <property type="component" value="Chromosome"/>
</dbReference>
<dbReference type="GO" id="GO:0005737">
    <property type="term" value="C:cytoplasm"/>
    <property type="evidence" value="ECO:0007669"/>
    <property type="project" value="UniProtKB-SubCell"/>
</dbReference>
<dbReference type="GO" id="GO:0003677">
    <property type="term" value="F:DNA binding"/>
    <property type="evidence" value="ECO:0007669"/>
    <property type="project" value="UniProtKB-UniRule"/>
</dbReference>
<dbReference type="GO" id="GO:0003700">
    <property type="term" value="F:DNA-binding transcription factor activity"/>
    <property type="evidence" value="ECO:0007669"/>
    <property type="project" value="UniProtKB-UniRule"/>
</dbReference>
<dbReference type="GO" id="GO:0045892">
    <property type="term" value="P:negative regulation of DNA-templated transcription"/>
    <property type="evidence" value="ECO:0007669"/>
    <property type="project" value="InterPro"/>
</dbReference>
<dbReference type="GO" id="GO:0051775">
    <property type="term" value="P:response to redox state"/>
    <property type="evidence" value="ECO:0007669"/>
    <property type="project" value="InterPro"/>
</dbReference>
<dbReference type="Gene3D" id="3.40.50.720">
    <property type="entry name" value="NAD(P)-binding Rossmann-like Domain"/>
    <property type="match status" value="1"/>
</dbReference>
<dbReference type="Gene3D" id="1.10.10.10">
    <property type="entry name" value="Winged helix-like DNA-binding domain superfamily/Winged helix DNA-binding domain"/>
    <property type="match status" value="1"/>
</dbReference>
<dbReference type="HAMAP" id="MF_01131">
    <property type="entry name" value="Rex"/>
    <property type="match status" value="1"/>
</dbReference>
<dbReference type="InterPro" id="IPR003781">
    <property type="entry name" value="CoA-bd"/>
</dbReference>
<dbReference type="InterPro" id="IPR036291">
    <property type="entry name" value="NAD(P)-bd_dom_sf"/>
</dbReference>
<dbReference type="InterPro" id="IPR009718">
    <property type="entry name" value="Rex_DNA-bd_C_dom"/>
</dbReference>
<dbReference type="InterPro" id="IPR022876">
    <property type="entry name" value="Tscrpt_rep_Rex"/>
</dbReference>
<dbReference type="InterPro" id="IPR036388">
    <property type="entry name" value="WH-like_DNA-bd_sf"/>
</dbReference>
<dbReference type="InterPro" id="IPR036390">
    <property type="entry name" value="WH_DNA-bd_sf"/>
</dbReference>
<dbReference type="NCBIfam" id="NF003989">
    <property type="entry name" value="PRK05472.1-3"/>
    <property type="match status" value="1"/>
</dbReference>
<dbReference type="NCBIfam" id="NF003991">
    <property type="entry name" value="PRK05472.1-5"/>
    <property type="match status" value="1"/>
</dbReference>
<dbReference type="NCBIfam" id="NF003994">
    <property type="entry name" value="PRK05472.2-3"/>
    <property type="match status" value="1"/>
</dbReference>
<dbReference type="NCBIfam" id="NF003995">
    <property type="entry name" value="PRK05472.2-4"/>
    <property type="match status" value="1"/>
</dbReference>
<dbReference type="NCBIfam" id="NF003996">
    <property type="entry name" value="PRK05472.2-5"/>
    <property type="match status" value="1"/>
</dbReference>
<dbReference type="PANTHER" id="PTHR35786">
    <property type="entry name" value="REDOX-SENSING TRANSCRIPTIONAL REPRESSOR REX"/>
    <property type="match status" value="1"/>
</dbReference>
<dbReference type="PANTHER" id="PTHR35786:SF1">
    <property type="entry name" value="REDOX-SENSING TRANSCRIPTIONAL REPRESSOR REX 1"/>
    <property type="match status" value="1"/>
</dbReference>
<dbReference type="Pfam" id="PF02629">
    <property type="entry name" value="CoA_binding"/>
    <property type="match status" value="1"/>
</dbReference>
<dbReference type="Pfam" id="PF06971">
    <property type="entry name" value="Put_DNA-bind_N"/>
    <property type="match status" value="1"/>
</dbReference>
<dbReference type="SMART" id="SM00881">
    <property type="entry name" value="CoA_binding"/>
    <property type="match status" value="1"/>
</dbReference>
<dbReference type="SUPFAM" id="SSF51735">
    <property type="entry name" value="NAD(P)-binding Rossmann-fold domains"/>
    <property type="match status" value="1"/>
</dbReference>
<dbReference type="SUPFAM" id="SSF46785">
    <property type="entry name" value="Winged helix' DNA-binding domain"/>
    <property type="match status" value="1"/>
</dbReference>
<protein>
    <recommendedName>
        <fullName evidence="1">Redox-sensing transcriptional repressor Rex</fullName>
    </recommendedName>
</protein>
<organism>
    <name type="scientific">Staphylococcus aureus (strain Mu50 / ATCC 700699)</name>
    <dbReference type="NCBI Taxonomy" id="158878"/>
    <lineage>
        <taxon>Bacteria</taxon>
        <taxon>Bacillati</taxon>
        <taxon>Bacillota</taxon>
        <taxon>Bacilli</taxon>
        <taxon>Bacillales</taxon>
        <taxon>Staphylococcaceae</taxon>
        <taxon>Staphylococcus</taxon>
    </lineage>
</organism>
<accession>P60385</accession>
<accession>Q99SK6</accession>
<keyword id="KW-0963">Cytoplasm</keyword>
<keyword id="KW-0238">DNA-binding</keyword>
<keyword id="KW-0520">NAD</keyword>
<keyword id="KW-0678">Repressor</keyword>
<keyword id="KW-0804">Transcription</keyword>
<keyword id="KW-0805">Transcription regulation</keyword>
<feature type="chain" id="PRO_0000097904" description="Redox-sensing transcriptional repressor Rex">
    <location>
        <begin position="1"/>
        <end position="211"/>
    </location>
</feature>
<feature type="DNA-binding region" description="H-T-H motif" evidence="1">
    <location>
        <begin position="17"/>
        <end position="56"/>
    </location>
</feature>
<feature type="binding site" evidence="1">
    <location>
        <begin position="91"/>
        <end position="96"/>
    </location>
    <ligand>
        <name>NAD(+)</name>
        <dbReference type="ChEBI" id="CHEBI:57540"/>
    </ligand>
</feature>
<evidence type="ECO:0000255" key="1">
    <source>
        <dbReference type="HAMAP-Rule" id="MF_01131"/>
    </source>
</evidence>
<proteinExistence type="inferred from homology"/>
<reference key="1">
    <citation type="journal article" date="2001" name="Lancet">
        <title>Whole genome sequencing of meticillin-resistant Staphylococcus aureus.</title>
        <authorList>
            <person name="Kuroda M."/>
            <person name="Ohta T."/>
            <person name="Uchiyama I."/>
            <person name="Baba T."/>
            <person name="Yuzawa H."/>
            <person name="Kobayashi I."/>
            <person name="Cui L."/>
            <person name="Oguchi A."/>
            <person name="Aoki K."/>
            <person name="Nagai Y."/>
            <person name="Lian J.-Q."/>
            <person name="Ito T."/>
            <person name="Kanamori M."/>
            <person name="Matsumaru H."/>
            <person name="Maruyama A."/>
            <person name="Murakami H."/>
            <person name="Hosoyama A."/>
            <person name="Mizutani-Ui Y."/>
            <person name="Takahashi N.K."/>
            <person name="Sawano T."/>
            <person name="Inoue R."/>
            <person name="Kaito C."/>
            <person name="Sekimizu K."/>
            <person name="Hirakawa H."/>
            <person name="Kuhara S."/>
            <person name="Goto S."/>
            <person name="Yabuzaki J."/>
            <person name="Kanehisa M."/>
            <person name="Yamashita A."/>
            <person name="Oshima K."/>
            <person name="Furuya K."/>
            <person name="Yoshino C."/>
            <person name="Shiba T."/>
            <person name="Hattori M."/>
            <person name="Ogasawara N."/>
            <person name="Hayashi H."/>
            <person name="Hiramatsu K."/>
        </authorList>
    </citation>
    <scope>NUCLEOTIDE SEQUENCE [LARGE SCALE GENOMIC DNA]</scope>
    <source>
        <strain>Mu50 / ATCC 700699</strain>
    </source>
</reference>
<sequence>MSDQVKIPRATLKRLPLYYRFVSSLKSKGIDRVNSKAISDALQIDSATIRRDFSYFGELGKKGYGYNIDSLLDFFKSELSESDMIKIAIVGVGNLGKALLTYNFSIHDDMTITEAFDVKEDVIGQKIGNVIVKDNDELITTLKKEEIDVVILTTPERVAQKVADELVQAGVKGILNFTPGRINTPSDVQVHQIDLGIELQSLLFFMKNYSE</sequence>